<evidence type="ECO:0000250" key="1">
    <source>
        <dbReference type="UniProtKB" id="P56785"/>
    </source>
</evidence>
<evidence type="ECO:0000255" key="2"/>
<evidence type="ECO:0000256" key="3">
    <source>
        <dbReference type="SAM" id="MobiDB-lite"/>
    </source>
</evidence>
<evidence type="ECO:0000305" key="4"/>
<proteinExistence type="inferred from homology"/>
<comment type="function">
    <text evidence="1">Involved in protein precursor import into chloroplasts. May be part of an intermediate translocation complex acting as a protein-conducting channel at the inner envelope.</text>
</comment>
<comment type="subunit">
    <text evidence="1">Part of the Tic complex.</text>
</comment>
<comment type="subcellular location">
    <subcellularLocation>
        <location evidence="1">Plastid</location>
        <location evidence="1">Chloroplast inner membrane</location>
        <topology evidence="2">Multi-pass membrane protein</topology>
    </subcellularLocation>
</comment>
<comment type="miscellaneous">
    <text>There is a partial copy of the N-terminus (positions 1-364) of ycf1 in the inverted repeat (BAF49817).</text>
</comment>
<comment type="similarity">
    <text evidence="4">Belongs to the TIC214 family.</text>
</comment>
<protein>
    <recommendedName>
        <fullName evidence="1">Protein TIC 214</fullName>
    </recommendedName>
    <alternativeName>
        <fullName evidence="1">Translocon at the inner envelope membrane of chloroplasts 214</fullName>
        <shortName evidence="1">AtTIC214</shortName>
    </alternativeName>
</protein>
<geneLocation type="chloroplast"/>
<gene>
    <name evidence="1" type="primary">TIC214</name>
    <name type="synonym">ycf1-A</name>
</gene>
<gene>
    <name evidence="1" type="primary">TIC214</name>
    <name type="synonym">ycf1-B</name>
</gene>
<dbReference type="EMBL" id="AP009366">
    <property type="protein sequence ID" value="BAF49829.1"/>
    <property type="molecule type" value="Genomic_DNA"/>
</dbReference>
<dbReference type="EMBL" id="AP009366">
    <property type="protein sequence ID" value="BAF49817.1"/>
    <property type="molecule type" value="Genomic_DNA"/>
</dbReference>
<dbReference type="GO" id="GO:0009706">
    <property type="term" value="C:chloroplast inner membrane"/>
    <property type="evidence" value="ECO:0007669"/>
    <property type="project" value="UniProtKB-SubCell"/>
</dbReference>
<dbReference type="GO" id="GO:0015031">
    <property type="term" value="P:protein transport"/>
    <property type="evidence" value="ECO:0007669"/>
    <property type="project" value="UniProtKB-KW"/>
</dbReference>
<dbReference type="InterPro" id="IPR008896">
    <property type="entry name" value="TIC214"/>
</dbReference>
<dbReference type="PANTHER" id="PTHR33163:SF40">
    <property type="entry name" value="PROTEIN TIC 214"/>
    <property type="match status" value="1"/>
</dbReference>
<dbReference type="PANTHER" id="PTHR33163">
    <property type="entry name" value="PROTEIN TIC 214-RELATED"/>
    <property type="match status" value="1"/>
</dbReference>
<dbReference type="Pfam" id="PF05758">
    <property type="entry name" value="Ycf1"/>
    <property type="match status" value="1"/>
</dbReference>
<organism>
    <name type="scientific">Aethionema cordifolium</name>
    <name type="common">Lebanon stonecress</name>
    <dbReference type="NCBI Taxonomy" id="434059"/>
    <lineage>
        <taxon>Eukaryota</taxon>
        <taxon>Viridiplantae</taxon>
        <taxon>Streptophyta</taxon>
        <taxon>Embryophyta</taxon>
        <taxon>Tracheophyta</taxon>
        <taxon>Spermatophyta</taxon>
        <taxon>Magnoliopsida</taxon>
        <taxon>eudicotyledons</taxon>
        <taxon>Gunneridae</taxon>
        <taxon>Pentapetalae</taxon>
        <taxon>rosids</taxon>
        <taxon>malvids</taxon>
        <taxon>Brassicales</taxon>
        <taxon>Brassicaceae</taxon>
        <taxon>Aethionemeae</taxon>
        <taxon>Aethionema</taxon>
    </lineage>
</organism>
<accession>A4QJH4</accession>
<accession>A4QJG2</accession>
<feature type="chain" id="PRO_0000326559" description="Protein TIC 214">
    <location>
        <begin position="1"/>
        <end position="1774"/>
    </location>
</feature>
<feature type="transmembrane region" description="Helical" evidence="2">
    <location>
        <begin position="19"/>
        <end position="39"/>
    </location>
</feature>
<feature type="transmembrane region" description="Helical" evidence="2">
    <location>
        <begin position="68"/>
        <end position="88"/>
    </location>
</feature>
<feature type="transmembrane region" description="Helical" evidence="2">
    <location>
        <begin position="91"/>
        <end position="111"/>
    </location>
</feature>
<feature type="transmembrane region" description="Helical" evidence="2">
    <location>
        <begin position="133"/>
        <end position="153"/>
    </location>
</feature>
<feature type="transmembrane region" description="Helical" evidence="2">
    <location>
        <begin position="176"/>
        <end position="196"/>
    </location>
</feature>
<feature type="transmembrane region" description="Helical" evidence="2">
    <location>
        <begin position="227"/>
        <end position="247"/>
    </location>
</feature>
<feature type="region of interest" description="Disordered" evidence="3">
    <location>
        <begin position="254"/>
        <end position="275"/>
    </location>
</feature>
<feature type="compositionally biased region" description="Basic and acidic residues" evidence="3">
    <location>
        <begin position="254"/>
        <end position="268"/>
    </location>
</feature>
<feature type="sequence conflict" description="In Ref. 1; BAF49817." evidence="4" ref="1">
    <original>DSVLWFEKPFVTLVFDYKRWNRPNRYIKNDQIENAVRNEMSQYFF</original>
    <variation>IHKTNTRTDTKRYDFHLYIL</variation>
    <location>
        <begin position="345"/>
        <end position="389"/>
    </location>
</feature>
<keyword id="KW-0150">Chloroplast</keyword>
<keyword id="KW-0472">Membrane</keyword>
<keyword id="KW-0934">Plastid</keyword>
<keyword id="KW-1001">Plastid inner membrane</keyword>
<keyword id="KW-0653">Protein transport</keyword>
<keyword id="KW-0812">Transmembrane</keyword>
<keyword id="KW-1133">Transmembrane helix</keyword>
<keyword id="KW-0813">Transport</keyword>
<reference key="1">
    <citation type="submission" date="2007-03" db="EMBL/GenBank/DDBJ databases">
        <title>Sequencing analysis of Aethionema coridifolium chloroplast DNA.</title>
        <authorList>
            <person name="Hosouchi T."/>
            <person name="Tsuruoka H."/>
            <person name="Kotani H."/>
        </authorList>
    </citation>
    <scope>NUCLEOTIDE SEQUENCE [LARGE SCALE GENOMIC DNA]</scope>
</reference>
<name>TI214_AETCO</name>
<sequence length="1774" mass="212223">MMVFQSFILGNLVSLCMKIINSVVVVGLYYGFLTTFSIGPSYLFLLRARVMDEGEEGTEKKVSATTGFIAGQLMMFISIYYAPLHLALGRPHTITVLALPYLLFHFFWNNHKHFFDYGSTTRNEMRNLRIQCVFLNNLIFQLFNHFILPSSMLARLVNIYMFRCNNKMLFVTSSFVGWLIGHILFMKWVGLVLVWIQQNHSIRSNVLIRSNKYKFLVSELRNSMARIFSILLFITCVYYLGRIPSPIFTKKLKGTSETEERGGTKQDQEVSTEEAPFPSLFSEEREDLDQIDEIDEIRVNAKEQINKDDEFHIRTYYNYKKVSENLDGNKENSNLEFLKIKKKEDSVLWFEKPFVTLVFDYKRWNRPNRYIKNDQIENAVRNEMSQYFFSACQSDGKDRISFSYPRNISTFFDMIQKKIPSFRREKTPSDKFSTCWSLINEEKKENLKKEFLHRIEALDKEWSVEHILEKTTRFCHNETRKEYLPKIYDPFLQGISRGRIQRLVPFQIITETYIKNNIGRSWINKIHGILLNINYQKFEQTIEKFNRKSSAIEKKLSYFFDPQEEKLNSEEEIKIFKFLFDVVLTDSNDQMLSKNFLDVHEIHKKVPRWSYKLRSDLEELEGENEETIPMEPGIRARKAKRVVIFTDTEPHNEIYTNLKNNQNYDQNDEMVLIRYSQQSDFRREIIQGSMRPQRRKTVIWEFCQANMHSPFFFDKIGKFFFFSFDIRGLTKKILRNFMWKNGKKKLDKKYEDKSKRKEKRRLEIAEVWDSFLFAQILRSSLLVTQSILRKYIILPLLIIIKNSVRMLLFQIPEWSEDLKDWKREMHVKCTYNGVQLSETEFPRKWLTDGIQIKILFPFYLKPWHKSKFHSSQKGRLKKTKDKNDFCFLTVWGMETELPFGSAQKQPSFFEPFFKEFKKKMKKYKTKSLLVLRFFKERDKIFAKEIKNGILKNFIFIKGKRNDLSKGNRIPLFDLREIYELTETKNDSITSNPIIHELSVQNRSMEWKNSSFSENKIKNLIDRINTIRNQIEAISKEKKKITNSSNKTPYESKIIESSKKKWQIVKRINTRLIRKIFYFVKFCLEQLSLGIVVGIMNIPRMTTQFFFESTKKILDKSIYKNEETEDKITKKKNTIYLISTIKKLISNKKKMSYDICSLSQAYVFYKLSQLQVSNFSKLRAVLEYNICGTSLFVTNQIKDFFQKHGIFHYKLKEKTFLNSEINPWKNWLRSHYQYNLPEIVWARLVTEKWKNQINQNSLVLNKSLNKEDSYEKNKFDNYKKLNYLKADSLLNPKQKQNFKKDSIYNIFCYKSINSKEKSFDMPLEIIIDNFLVSSFRGKSNIRDIGEFRTRKYLEWRIIPFWFIKKVNIESAVDTKSQKIYIKTQVQNSEKIDKITKMGLANQKSLFFDWMGMNEEILNYPIANLEFLFFPEFFLFSSTYKIKPWVIPIKLLLFNFNEKKNLNKIITRNKNGFIPSNEKKYLRFYNLTNDEKEKQRNPQLALPNQEKNIEENYAESKIKKRQNKKQYKSNTEVELDLFLTRYSRFQLRWNFFLNKKILNNVKIYCLLVRLKNPNKIAISSIERGEMSLDILMIEKNLTFAKLMKKGILIIEPLRSSVKNDGQLIIYRTIGISLVHKNNHQISQRDKKKIEKSITQLKKKTVNRKKNNYDFFVPEKILSPKRRREFRILICSKLKKKSTRYRNSRFDKNIQNCGQVLNQTKYLDNDKTNLINLKFFLWPNFRLEDLACMNRYWFNTNNGNHFSMIRIHMYTRLKINS</sequence>